<sequence>MIQSSLYRALNKGFDYQILACKDFKESELAKEVISYFKPNTKAILFPEFRAKKNDDLRSFFEEFLQLLGGLREFYQALENKQETIIIAPISALLHPLPKKELLESFKITLLEKYNLKDLKDKLFYYGYEILDLVEVEGEASFRGDIVDIYAPNSKAYRLSFFDTECESIKEFDPITQMSLKEDLLEIEIPPTLFSLDESSYKDLKTKVEQSPLNSFSKDLTSFGLWFLGEKAQDLLIVYKSIISPRALEEIQELASLNELDCERFKFLKVLENAQGYEDLEIHAHALEGFIALHSNHKITLLAPNKTILDNAISALDAGNMECVIAPFVLNFKTPDGIFISLNSFERKKKRQKSKLALNELNPGEWVVHDDYGVGVFSQLVQHSVLGSKRDFLEIAYLGEDKLLLPVENLHLIARYVAQSDSVPAKDRLGKGSFLKLKAKVRTKLLEIASKIIELAAERNLILGKKMDVHLAELEVFKSHAGFEYTSDQEKAIAEISKDLSSHRVMDRLLSGDVGFGKTEVAMHAIFCAFLNGFQSALVVPTTLLAHQHFETLRARFENFGVKVARLDRYASEKNKLLKAVELGQVDALIGTHAILGAKFKNLGLVVVDEEHKFGVKQKEALKELSKSVHFLSMSATPIPRTLNMALSQIKGISSLKTPPTDRKPSRTFLKEKNDELLKEIIYRELRRNGQIFYIHNHIASILKVKTKLEDLIPKLKIAILHSQINANESEEIMLEFAKGNYQVLLCTSIVESGIHLPNANTIIIDNAQNFGLADLHQLRGRVGRGKKEGFCYFLIEDQKSLNEQALKRLLALEKNSYLGSGESVAYHDLEIRGGGNLLGQDQSGHIKNIGYALYTRMLEDAIYELSGGKKRLEKSVEIQLGVSAFLNPELIASDSLRLDLYRRLSLCENTDEVGQIHEEIEDRFGKIDDLSAQFLQIITLKILANQLGIIKLSNFNQNITITYSDEKKESLKAPSKDDNDILETLLKHLRAQISLKRR</sequence>
<name>MFD_HELPY</name>
<gene>
    <name evidence="1" type="primary">mfd</name>
    <name type="ordered locus">HP_1541</name>
</gene>
<comment type="function">
    <text evidence="1">Couples transcription and DNA repair by recognizing RNA polymerase (RNAP) stalled at DNA lesions. Mediates ATP-dependent release of RNAP and its truncated transcript from the DNA, and recruitment of nucleotide excision repair machinery to the damaged site.</text>
</comment>
<comment type="subcellular location">
    <subcellularLocation>
        <location evidence="1">Cytoplasm</location>
    </subcellularLocation>
</comment>
<comment type="similarity">
    <text evidence="1">In the N-terminal section; belongs to the UvrB family.</text>
</comment>
<comment type="similarity">
    <text evidence="1">In the C-terminal section; belongs to the helicase family. RecG subfamily.</text>
</comment>
<keyword id="KW-0067">ATP-binding</keyword>
<keyword id="KW-0963">Cytoplasm</keyword>
<keyword id="KW-0227">DNA damage</keyword>
<keyword id="KW-0234">DNA repair</keyword>
<keyword id="KW-0238">DNA-binding</keyword>
<keyword id="KW-0347">Helicase</keyword>
<keyword id="KW-0378">Hydrolase</keyword>
<keyword id="KW-0547">Nucleotide-binding</keyword>
<keyword id="KW-1185">Reference proteome</keyword>
<feature type="chain" id="PRO_0000102168" description="Transcription-repair-coupling factor">
    <location>
        <begin position="1"/>
        <end position="999"/>
    </location>
</feature>
<feature type="domain" description="Helicase ATP-binding" evidence="1">
    <location>
        <begin position="499"/>
        <end position="656"/>
    </location>
</feature>
<feature type="domain" description="Helicase C-terminal" evidence="1">
    <location>
        <begin position="677"/>
        <end position="833"/>
    </location>
</feature>
<feature type="short sequence motif" description="DEEH box">
    <location>
        <begin position="609"/>
        <end position="612"/>
    </location>
</feature>
<feature type="binding site" evidence="1">
    <location>
        <begin position="512"/>
        <end position="519"/>
    </location>
    <ligand>
        <name>ATP</name>
        <dbReference type="ChEBI" id="CHEBI:30616"/>
    </ligand>
</feature>
<organism>
    <name type="scientific">Helicobacter pylori (strain ATCC 700392 / 26695)</name>
    <name type="common">Campylobacter pylori</name>
    <dbReference type="NCBI Taxonomy" id="85962"/>
    <lineage>
        <taxon>Bacteria</taxon>
        <taxon>Pseudomonadati</taxon>
        <taxon>Campylobacterota</taxon>
        <taxon>Epsilonproteobacteria</taxon>
        <taxon>Campylobacterales</taxon>
        <taxon>Helicobacteraceae</taxon>
        <taxon>Helicobacter</taxon>
    </lineage>
</organism>
<reference key="1">
    <citation type="journal article" date="1997" name="Nature">
        <title>The complete genome sequence of the gastric pathogen Helicobacter pylori.</title>
        <authorList>
            <person name="Tomb J.-F."/>
            <person name="White O."/>
            <person name="Kerlavage A.R."/>
            <person name="Clayton R.A."/>
            <person name="Sutton G.G."/>
            <person name="Fleischmann R.D."/>
            <person name="Ketchum K.A."/>
            <person name="Klenk H.-P."/>
            <person name="Gill S.R."/>
            <person name="Dougherty B.A."/>
            <person name="Nelson K.E."/>
            <person name="Quackenbush J."/>
            <person name="Zhou L."/>
            <person name="Kirkness E.F."/>
            <person name="Peterson S.N."/>
            <person name="Loftus B.J."/>
            <person name="Richardson D.L."/>
            <person name="Dodson R.J."/>
            <person name="Khalak H.G."/>
            <person name="Glodek A."/>
            <person name="McKenney K."/>
            <person name="FitzGerald L.M."/>
            <person name="Lee N."/>
            <person name="Adams M.D."/>
            <person name="Hickey E.K."/>
            <person name="Berg D.E."/>
            <person name="Gocayne J.D."/>
            <person name="Utterback T.R."/>
            <person name="Peterson J.D."/>
            <person name="Kelley J.M."/>
            <person name="Cotton M.D."/>
            <person name="Weidman J.F."/>
            <person name="Fujii C."/>
            <person name="Bowman C."/>
            <person name="Watthey L."/>
            <person name="Wallin E."/>
            <person name="Hayes W.S."/>
            <person name="Borodovsky M."/>
            <person name="Karp P.D."/>
            <person name="Smith H.O."/>
            <person name="Fraser C.M."/>
            <person name="Venter J.C."/>
        </authorList>
    </citation>
    <scope>NUCLEOTIDE SEQUENCE [LARGE SCALE GENOMIC DNA]</scope>
    <source>
        <strain>ATCC 700392 / 26695</strain>
    </source>
</reference>
<dbReference type="EC" id="3.6.4.-" evidence="1"/>
<dbReference type="EMBL" id="AE000511">
    <property type="protein sequence ID" value="AAD08581.1"/>
    <property type="molecule type" value="Genomic_DNA"/>
</dbReference>
<dbReference type="PIR" id="E64712">
    <property type="entry name" value="E64712"/>
</dbReference>
<dbReference type="RefSeq" id="NP_208332.1">
    <property type="nucleotide sequence ID" value="NC_000915.1"/>
</dbReference>
<dbReference type="RefSeq" id="WP_000616334.1">
    <property type="nucleotide sequence ID" value="NC_018939.1"/>
</dbReference>
<dbReference type="SMR" id="O26066"/>
<dbReference type="DIP" id="DIP-3189N"/>
<dbReference type="FunCoup" id="O26066">
    <property type="interactions" value="333"/>
</dbReference>
<dbReference type="IntAct" id="O26066">
    <property type="interactions" value="8"/>
</dbReference>
<dbReference type="MINT" id="O26066"/>
<dbReference type="STRING" id="85962.HP_1541"/>
<dbReference type="PaxDb" id="85962-C694_07985"/>
<dbReference type="EnsemblBacteria" id="AAD08581">
    <property type="protein sequence ID" value="AAD08581"/>
    <property type="gene ID" value="HP_1541"/>
</dbReference>
<dbReference type="KEGG" id="heo:C694_07985"/>
<dbReference type="KEGG" id="hpy:HP_1541"/>
<dbReference type="PATRIC" id="fig|85962.47.peg.1657"/>
<dbReference type="eggNOG" id="COG1197">
    <property type="taxonomic scope" value="Bacteria"/>
</dbReference>
<dbReference type="InParanoid" id="O26066"/>
<dbReference type="OrthoDB" id="9804325at2"/>
<dbReference type="PhylomeDB" id="O26066"/>
<dbReference type="Proteomes" id="UP000000429">
    <property type="component" value="Chromosome"/>
</dbReference>
<dbReference type="GO" id="GO:0005737">
    <property type="term" value="C:cytoplasm"/>
    <property type="evidence" value="ECO:0007669"/>
    <property type="project" value="UniProtKB-SubCell"/>
</dbReference>
<dbReference type="GO" id="GO:0043138">
    <property type="term" value="F:3'-5' DNA helicase activity"/>
    <property type="evidence" value="ECO:0000318"/>
    <property type="project" value="GO_Central"/>
</dbReference>
<dbReference type="GO" id="GO:0005524">
    <property type="term" value="F:ATP binding"/>
    <property type="evidence" value="ECO:0007669"/>
    <property type="project" value="UniProtKB-UniRule"/>
</dbReference>
<dbReference type="GO" id="GO:0003684">
    <property type="term" value="F:damaged DNA binding"/>
    <property type="evidence" value="ECO:0007669"/>
    <property type="project" value="InterPro"/>
</dbReference>
<dbReference type="GO" id="GO:0016787">
    <property type="term" value="F:hydrolase activity"/>
    <property type="evidence" value="ECO:0007669"/>
    <property type="project" value="UniProtKB-KW"/>
</dbReference>
<dbReference type="GO" id="GO:0006310">
    <property type="term" value="P:DNA recombination"/>
    <property type="evidence" value="ECO:0000318"/>
    <property type="project" value="GO_Central"/>
</dbReference>
<dbReference type="GO" id="GO:0006260">
    <property type="term" value="P:DNA replication"/>
    <property type="evidence" value="ECO:0000318"/>
    <property type="project" value="GO_Central"/>
</dbReference>
<dbReference type="GO" id="GO:0006270">
    <property type="term" value="P:DNA replication initiation"/>
    <property type="evidence" value="ECO:0000318"/>
    <property type="project" value="GO_Central"/>
</dbReference>
<dbReference type="GO" id="GO:0006302">
    <property type="term" value="P:double-strand break repair"/>
    <property type="evidence" value="ECO:0000318"/>
    <property type="project" value="GO_Central"/>
</dbReference>
<dbReference type="GO" id="GO:0006355">
    <property type="term" value="P:regulation of DNA-templated transcription"/>
    <property type="evidence" value="ECO:0007669"/>
    <property type="project" value="UniProtKB-UniRule"/>
</dbReference>
<dbReference type="GO" id="GO:0000716">
    <property type="term" value="P:transcription-coupled nucleotide-excision repair, DNA damage recognition"/>
    <property type="evidence" value="ECO:0007669"/>
    <property type="project" value="UniProtKB-UniRule"/>
</dbReference>
<dbReference type="CDD" id="cd17991">
    <property type="entry name" value="DEXHc_TRCF"/>
    <property type="match status" value="1"/>
</dbReference>
<dbReference type="CDD" id="cd18810">
    <property type="entry name" value="SF2_C_TRCF"/>
    <property type="match status" value="1"/>
</dbReference>
<dbReference type="Gene3D" id="2.40.10.170">
    <property type="match status" value="1"/>
</dbReference>
<dbReference type="Gene3D" id="3.40.50.300">
    <property type="entry name" value="P-loop containing nucleotide triphosphate hydrolases"/>
    <property type="match status" value="2"/>
</dbReference>
<dbReference type="Gene3D" id="3.30.2060.10">
    <property type="entry name" value="Penicillin-binding protein 1b domain"/>
    <property type="match status" value="1"/>
</dbReference>
<dbReference type="Gene3D" id="3.90.1150.50">
    <property type="entry name" value="Transcription-repair-coupling factor, D7 domain"/>
    <property type="match status" value="1"/>
</dbReference>
<dbReference type="HAMAP" id="MF_00969">
    <property type="entry name" value="TRCF"/>
    <property type="match status" value="1"/>
</dbReference>
<dbReference type="InterPro" id="IPR003711">
    <property type="entry name" value="CarD-like/TRCF_RID"/>
</dbReference>
<dbReference type="InterPro" id="IPR036101">
    <property type="entry name" value="CarD-like/TRCF_RID_sf"/>
</dbReference>
<dbReference type="InterPro" id="IPR011545">
    <property type="entry name" value="DEAD/DEAH_box_helicase_dom"/>
</dbReference>
<dbReference type="InterPro" id="IPR014001">
    <property type="entry name" value="Helicase_ATP-bd"/>
</dbReference>
<dbReference type="InterPro" id="IPR001650">
    <property type="entry name" value="Helicase_C-like"/>
</dbReference>
<dbReference type="InterPro" id="IPR004576">
    <property type="entry name" value="Mfd"/>
</dbReference>
<dbReference type="InterPro" id="IPR027417">
    <property type="entry name" value="P-loop_NTPase"/>
</dbReference>
<dbReference type="InterPro" id="IPR050880">
    <property type="entry name" value="PriA_helicase"/>
</dbReference>
<dbReference type="InterPro" id="IPR037235">
    <property type="entry name" value="TRCF-like_C_D7"/>
</dbReference>
<dbReference type="InterPro" id="IPR005118">
    <property type="entry name" value="TRCF_C"/>
</dbReference>
<dbReference type="InterPro" id="IPR041471">
    <property type="entry name" value="UvrB_inter"/>
</dbReference>
<dbReference type="NCBIfam" id="TIGR00580">
    <property type="entry name" value="mfd"/>
    <property type="match status" value="1"/>
</dbReference>
<dbReference type="PANTHER" id="PTHR30580">
    <property type="entry name" value="PRIMOSOMAL PROTEIN N"/>
    <property type="match status" value="1"/>
</dbReference>
<dbReference type="PANTHER" id="PTHR30580:SF0">
    <property type="entry name" value="PRIMOSOMAL PROTEIN N"/>
    <property type="match status" value="1"/>
</dbReference>
<dbReference type="Pfam" id="PF02559">
    <property type="entry name" value="CarD_TRCF_RID"/>
    <property type="match status" value="1"/>
</dbReference>
<dbReference type="Pfam" id="PF00270">
    <property type="entry name" value="DEAD"/>
    <property type="match status" value="1"/>
</dbReference>
<dbReference type="Pfam" id="PF00271">
    <property type="entry name" value="Helicase_C"/>
    <property type="match status" value="1"/>
</dbReference>
<dbReference type="Pfam" id="PF03461">
    <property type="entry name" value="TRCF"/>
    <property type="match status" value="1"/>
</dbReference>
<dbReference type="Pfam" id="PF17757">
    <property type="entry name" value="UvrB_inter"/>
    <property type="match status" value="1"/>
</dbReference>
<dbReference type="SMART" id="SM01058">
    <property type="entry name" value="CarD_TRCF"/>
    <property type="match status" value="1"/>
</dbReference>
<dbReference type="SMART" id="SM00487">
    <property type="entry name" value="DEXDc"/>
    <property type="match status" value="1"/>
</dbReference>
<dbReference type="SMART" id="SM00490">
    <property type="entry name" value="HELICc"/>
    <property type="match status" value="1"/>
</dbReference>
<dbReference type="SMART" id="SM00982">
    <property type="entry name" value="TRCF"/>
    <property type="match status" value="1"/>
</dbReference>
<dbReference type="SUPFAM" id="SSF141259">
    <property type="entry name" value="CarD-like"/>
    <property type="match status" value="1"/>
</dbReference>
<dbReference type="SUPFAM" id="SSF52540">
    <property type="entry name" value="P-loop containing nucleoside triphosphate hydrolases"/>
    <property type="match status" value="3"/>
</dbReference>
<dbReference type="SUPFAM" id="SSF143517">
    <property type="entry name" value="TRCF domain-like"/>
    <property type="match status" value="1"/>
</dbReference>
<dbReference type="PROSITE" id="PS51192">
    <property type="entry name" value="HELICASE_ATP_BIND_1"/>
    <property type="match status" value="1"/>
</dbReference>
<dbReference type="PROSITE" id="PS51194">
    <property type="entry name" value="HELICASE_CTER"/>
    <property type="match status" value="1"/>
</dbReference>
<accession>O26066</accession>
<proteinExistence type="inferred from homology"/>
<protein>
    <recommendedName>
        <fullName evidence="1">Transcription-repair-coupling factor</fullName>
        <shortName evidence="1">TRCF</shortName>
        <ecNumber evidence="1">3.6.4.-</ecNumber>
    </recommendedName>
</protein>
<evidence type="ECO:0000255" key="1">
    <source>
        <dbReference type="HAMAP-Rule" id="MF_00969"/>
    </source>
</evidence>